<sequence>MASLFKKKTVDDVIKEQNRELRGTQRAIIRDRAALEKQEKQLELEIKKMAKIGNKEACRVLAKQLVHLRKQKTRTFAVSSKVTSMSTQTKVMNSQMKMAGAMSTTAKTMQAVNKKMDPQKTLQTMQNFQKENMKMEMTEEMINDTLDDIFDGSDDEEESQDIVNQVLDEIGIEISGKMAKAPSAARSLPSASTSKSTISDEEIERQLKALGVD</sequence>
<proteinExistence type="evidence at transcript level"/>
<protein>
    <recommendedName>
        <fullName>Charged multivesicular body protein 2b</fullName>
    </recommendedName>
    <alternativeName>
        <fullName>Chromatin-modifying protein 2b</fullName>
        <shortName>CHMP2b</shortName>
    </alternativeName>
</protein>
<name>CHM2B_BOVIN</name>
<feature type="initiator methionine" description="Removed" evidence="2">
    <location>
        <position position="1"/>
    </location>
</feature>
<feature type="chain" id="PRO_0000211468" description="Charged multivesicular body protein 2b">
    <location>
        <begin position="2"/>
        <end position="213"/>
    </location>
</feature>
<feature type="region of interest" description="Disordered" evidence="4">
    <location>
        <begin position="178"/>
        <end position="202"/>
    </location>
</feature>
<feature type="coiled-coil region" evidence="3">
    <location>
        <begin position="25"/>
        <end position="55"/>
    </location>
</feature>
<feature type="short sequence motif" description="MIT-interacting motif">
    <location>
        <begin position="201"/>
        <end position="211"/>
    </location>
</feature>
<feature type="compositionally biased region" description="Low complexity" evidence="4">
    <location>
        <begin position="179"/>
        <end position="194"/>
    </location>
</feature>
<feature type="modified residue" description="N-acetylalanine" evidence="2">
    <location>
        <position position="2"/>
    </location>
</feature>
<feature type="modified residue" description="Phosphoserine" evidence="2">
    <location>
        <position position="199"/>
    </location>
</feature>
<organism>
    <name type="scientific">Bos taurus</name>
    <name type="common">Bovine</name>
    <dbReference type="NCBI Taxonomy" id="9913"/>
    <lineage>
        <taxon>Eukaryota</taxon>
        <taxon>Metazoa</taxon>
        <taxon>Chordata</taxon>
        <taxon>Craniata</taxon>
        <taxon>Vertebrata</taxon>
        <taxon>Euteleostomi</taxon>
        <taxon>Mammalia</taxon>
        <taxon>Eutheria</taxon>
        <taxon>Laurasiatheria</taxon>
        <taxon>Artiodactyla</taxon>
        <taxon>Ruminantia</taxon>
        <taxon>Pecora</taxon>
        <taxon>Bovidae</taxon>
        <taxon>Bovinae</taxon>
        <taxon>Bos</taxon>
    </lineage>
</organism>
<reference key="1">
    <citation type="submission" date="2005-09" db="EMBL/GenBank/DDBJ databases">
        <authorList>
            <consortium name="NIH - Mammalian Gene Collection (MGC) project"/>
        </authorList>
    </citation>
    <scope>NUCLEOTIDE SEQUENCE [LARGE SCALE MRNA]</scope>
    <source>
        <strain>Hereford</strain>
        <tissue>Uterus</tissue>
    </source>
</reference>
<accession>Q3SX42</accession>
<keyword id="KW-0007">Acetylation</keyword>
<keyword id="KW-0175">Coiled coil</keyword>
<keyword id="KW-0963">Cytoplasm</keyword>
<keyword id="KW-0967">Endosome</keyword>
<keyword id="KW-0472">Membrane</keyword>
<keyword id="KW-0597">Phosphoprotein</keyword>
<keyword id="KW-0653">Protein transport</keyword>
<keyword id="KW-1185">Reference proteome</keyword>
<keyword id="KW-0813">Transport</keyword>
<gene>
    <name type="primary">CHMP2B</name>
</gene>
<evidence type="ECO:0000250" key="1"/>
<evidence type="ECO:0000250" key="2">
    <source>
        <dbReference type="UniProtKB" id="Q9UQN3"/>
    </source>
</evidence>
<evidence type="ECO:0000255" key="3"/>
<evidence type="ECO:0000256" key="4">
    <source>
        <dbReference type="SAM" id="MobiDB-lite"/>
    </source>
</evidence>
<evidence type="ECO:0000305" key="5"/>
<comment type="function">
    <text evidence="1">Probable core component of the endosomal sorting required for transport complex III (ESCRT-III) which is involved in multivesicular bodies (MVBs) formation and sorting of endosomal cargo proteins into MVBs. MVBs contain intraluminal vesicles (ILVs) that are generated by invagination and scission from the limiting membrane of the endosome and mostly are delivered to lysosomes enabling degradation of membrane proteins, such as stimulated growth factor receptors, lysosomal enzymes and lipids. The MVB pathway appears to require the sequential function of ESCRT-O, -I,-II and -III complexes. ESCRT-III proteins mostly dissociate from the invaginating membrane before the ILV is released. The ESCRT machinery also functions in topologically equivalent membrane fission events, such as the terminal stages of cytokinesis and the budding of enveloped viruses (lentiviruses). ESCRT-III proteins are believed to mediate the necessary vesicle extrusion and/or membrane fission activities, possibly in conjunction with the AAA ATPase VPS4 (By similarity).</text>
</comment>
<comment type="subunit">
    <text evidence="1">Probable core component of the endosomal sorting required for transport complex III (ESCRT-III). ESCRT-III components are thought to multimerize to form a flat lattice on the perimeter membrane of the endosome. Several assembly forms of ESCRT-III may exist that interact and act sequentially. Interacts with CHMP2A. Interacts with VPS4A. Interacts with VPS4B; the interaction is direct (By similarity).</text>
</comment>
<comment type="subcellular location">
    <subcellularLocation>
        <location evidence="1">Cytoplasm</location>
        <location evidence="1">Cytosol</location>
    </subcellularLocation>
    <subcellularLocation>
        <location evidence="1">Late endosome membrane</location>
        <topology evidence="1">Peripheral membrane protein</topology>
    </subcellularLocation>
</comment>
<comment type="similarity">
    <text evidence="5">Belongs to the SNF7 family.</text>
</comment>
<dbReference type="EMBL" id="BC104514">
    <property type="protein sequence ID" value="AAI04515.1"/>
    <property type="molecule type" value="mRNA"/>
</dbReference>
<dbReference type="RefSeq" id="NP_001030549.1">
    <property type="nucleotide sequence ID" value="NM_001035472.1"/>
</dbReference>
<dbReference type="SMR" id="Q3SX42"/>
<dbReference type="FunCoup" id="Q3SX42">
    <property type="interactions" value="2532"/>
</dbReference>
<dbReference type="STRING" id="9913.ENSBTAP00000010436"/>
<dbReference type="PaxDb" id="9913-ENSBTAP00000010436"/>
<dbReference type="GeneID" id="615954"/>
<dbReference type="KEGG" id="bta:615954"/>
<dbReference type="CTD" id="25978"/>
<dbReference type="VEuPathDB" id="HostDB:ENSBTAG00000007939"/>
<dbReference type="eggNOG" id="KOG3231">
    <property type="taxonomic scope" value="Eukaryota"/>
</dbReference>
<dbReference type="HOGENOM" id="CLU_069208_1_2_1"/>
<dbReference type="InParanoid" id="Q3SX42"/>
<dbReference type="OMA" id="QDMFEDD"/>
<dbReference type="OrthoDB" id="5594417at2759"/>
<dbReference type="TreeFam" id="TF314163"/>
<dbReference type="Reactome" id="R-BTA-1632852">
    <property type="pathway name" value="Macroautophagy"/>
</dbReference>
<dbReference type="Reactome" id="R-BTA-5620971">
    <property type="pathway name" value="Pyroptosis"/>
</dbReference>
<dbReference type="Reactome" id="R-BTA-917729">
    <property type="pathway name" value="Endosomal Sorting Complex Required For Transport (ESCRT)"/>
</dbReference>
<dbReference type="Reactome" id="R-BTA-9668328">
    <property type="pathway name" value="Sealing of the nuclear envelope (NE) by ESCRT-III"/>
</dbReference>
<dbReference type="Proteomes" id="UP000009136">
    <property type="component" value="Chromosome 1"/>
</dbReference>
<dbReference type="Bgee" id="ENSBTAG00000007939">
    <property type="expression patterns" value="Expressed in rumen papilla and 104 other cell types or tissues"/>
</dbReference>
<dbReference type="GO" id="GO:0005829">
    <property type="term" value="C:cytosol"/>
    <property type="evidence" value="ECO:0007669"/>
    <property type="project" value="UniProtKB-SubCell"/>
</dbReference>
<dbReference type="GO" id="GO:0000815">
    <property type="term" value="C:ESCRT III complex"/>
    <property type="evidence" value="ECO:0000318"/>
    <property type="project" value="GO_Central"/>
</dbReference>
<dbReference type="GO" id="GO:0031902">
    <property type="term" value="C:late endosome membrane"/>
    <property type="evidence" value="ECO:0007669"/>
    <property type="project" value="UniProtKB-SubCell"/>
</dbReference>
<dbReference type="GO" id="GO:0005771">
    <property type="term" value="C:multivesicular body"/>
    <property type="evidence" value="ECO:0000318"/>
    <property type="project" value="GO_Central"/>
</dbReference>
<dbReference type="GO" id="GO:0032509">
    <property type="term" value="P:endosome transport via multivesicular body sorting pathway"/>
    <property type="evidence" value="ECO:0000318"/>
    <property type="project" value="GO_Central"/>
</dbReference>
<dbReference type="GO" id="GO:0045324">
    <property type="term" value="P:late endosome to vacuole transport"/>
    <property type="evidence" value="ECO:0000318"/>
    <property type="project" value="GO_Central"/>
</dbReference>
<dbReference type="GO" id="GO:0015031">
    <property type="term" value="P:protein transport"/>
    <property type="evidence" value="ECO:0000318"/>
    <property type="project" value="GO_Central"/>
</dbReference>
<dbReference type="Gene3D" id="6.10.140.1230">
    <property type="match status" value="1"/>
</dbReference>
<dbReference type="InterPro" id="IPR005024">
    <property type="entry name" value="Snf7_fam"/>
</dbReference>
<dbReference type="PANTHER" id="PTHR10476">
    <property type="entry name" value="CHARGED MULTIVESICULAR BODY PROTEIN"/>
    <property type="match status" value="1"/>
</dbReference>
<dbReference type="Pfam" id="PF03357">
    <property type="entry name" value="Snf7"/>
    <property type="match status" value="1"/>
</dbReference>